<comment type="function">
    <text evidence="1">This is one of the proteins that bind and probably mediate the attachment of the 5S RNA into the large ribosomal subunit, where it forms part of the central protuberance.</text>
</comment>
<comment type="subunit">
    <text evidence="1">Part of the 50S ribosomal subunit; part of the 5S rRNA/L5/L18/L25 subcomplex. Contacts the 5S and 23S rRNAs.</text>
</comment>
<comment type="similarity">
    <text evidence="1">Belongs to the universal ribosomal protein uL18 family.</text>
</comment>
<proteinExistence type="inferred from homology"/>
<evidence type="ECO:0000255" key="1">
    <source>
        <dbReference type="HAMAP-Rule" id="MF_01337"/>
    </source>
</evidence>
<evidence type="ECO:0000305" key="2"/>
<name>RL18_NEIMB</name>
<dbReference type="EMBL" id="AE002098">
    <property type="protein sequence ID" value="AAF40616.1"/>
    <property type="molecule type" value="Genomic_DNA"/>
</dbReference>
<dbReference type="RefSeq" id="NP_273216.1">
    <property type="nucleotide sequence ID" value="NC_003112.2"/>
</dbReference>
<dbReference type="RefSeq" id="WP_002215441.1">
    <property type="nucleotide sequence ID" value="NC_003112.2"/>
</dbReference>
<dbReference type="SMR" id="Q7DDT0"/>
<dbReference type="FunCoup" id="Q7DDT0">
    <property type="interactions" value="606"/>
</dbReference>
<dbReference type="STRING" id="122586.NMB0158"/>
<dbReference type="PaxDb" id="122586-NMB0158"/>
<dbReference type="GeneID" id="93387233"/>
<dbReference type="KEGG" id="nme:NMB0158"/>
<dbReference type="PATRIC" id="fig|122586.8.peg.199"/>
<dbReference type="HOGENOM" id="CLU_098841_0_1_4"/>
<dbReference type="InParanoid" id="Q7DDT0"/>
<dbReference type="OrthoDB" id="9810939at2"/>
<dbReference type="Proteomes" id="UP000000425">
    <property type="component" value="Chromosome"/>
</dbReference>
<dbReference type="GO" id="GO:0022625">
    <property type="term" value="C:cytosolic large ribosomal subunit"/>
    <property type="evidence" value="ECO:0000318"/>
    <property type="project" value="GO_Central"/>
</dbReference>
<dbReference type="GO" id="GO:0008097">
    <property type="term" value="F:5S rRNA binding"/>
    <property type="evidence" value="ECO:0000318"/>
    <property type="project" value="GO_Central"/>
</dbReference>
<dbReference type="GO" id="GO:0003735">
    <property type="term" value="F:structural constituent of ribosome"/>
    <property type="evidence" value="ECO:0007669"/>
    <property type="project" value="InterPro"/>
</dbReference>
<dbReference type="GO" id="GO:0006412">
    <property type="term" value="P:translation"/>
    <property type="evidence" value="ECO:0007669"/>
    <property type="project" value="UniProtKB-UniRule"/>
</dbReference>
<dbReference type="CDD" id="cd00432">
    <property type="entry name" value="Ribosomal_L18_L5e"/>
    <property type="match status" value="1"/>
</dbReference>
<dbReference type="FunFam" id="3.30.420.100:FF:000001">
    <property type="entry name" value="50S ribosomal protein L18"/>
    <property type="match status" value="1"/>
</dbReference>
<dbReference type="Gene3D" id="3.30.420.100">
    <property type="match status" value="1"/>
</dbReference>
<dbReference type="HAMAP" id="MF_01337_B">
    <property type="entry name" value="Ribosomal_uL18_B"/>
    <property type="match status" value="1"/>
</dbReference>
<dbReference type="InterPro" id="IPR004389">
    <property type="entry name" value="Ribosomal_uL18_bac-type"/>
</dbReference>
<dbReference type="InterPro" id="IPR005484">
    <property type="entry name" value="Ribosomal_uL18_bac/euk"/>
</dbReference>
<dbReference type="NCBIfam" id="TIGR00060">
    <property type="entry name" value="L18_bact"/>
    <property type="match status" value="1"/>
</dbReference>
<dbReference type="PANTHER" id="PTHR12899">
    <property type="entry name" value="39S RIBOSOMAL PROTEIN L18, MITOCHONDRIAL"/>
    <property type="match status" value="1"/>
</dbReference>
<dbReference type="PANTHER" id="PTHR12899:SF3">
    <property type="entry name" value="LARGE RIBOSOMAL SUBUNIT PROTEIN UL18M"/>
    <property type="match status" value="1"/>
</dbReference>
<dbReference type="Pfam" id="PF00861">
    <property type="entry name" value="Ribosomal_L18p"/>
    <property type="match status" value="1"/>
</dbReference>
<dbReference type="SUPFAM" id="SSF53137">
    <property type="entry name" value="Translational machinery components"/>
    <property type="match status" value="1"/>
</dbReference>
<protein>
    <recommendedName>
        <fullName evidence="1">Large ribosomal subunit protein uL18</fullName>
    </recommendedName>
    <alternativeName>
        <fullName evidence="2">50S ribosomal protein L18</fullName>
    </alternativeName>
</protein>
<gene>
    <name evidence="1" type="primary">rplR</name>
    <name type="ordered locus">NMB0158</name>
</gene>
<accession>Q7DDT0</accession>
<sequence length="117" mass="12798">MDKHTTRLRRARKTRARIADLKMVRLCVFRSNNHIYAQVISAEGDKVLAQASTLEAEVRGSLKSGSNVEAAAIVGKRIAEKAKAAGVEKVAFDRSGFQYHGRVKALAEAARENGLSF</sequence>
<organism>
    <name type="scientific">Neisseria meningitidis serogroup B (strain ATCC BAA-335 / MC58)</name>
    <dbReference type="NCBI Taxonomy" id="122586"/>
    <lineage>
        <taxon>Bacteria</taxon>
        <taxon>Pseudomonadati</taxon>
        <taxon>Pseudomonadota</taxon>
        <taxon>Betaproteobacteria</taxon>
        <taxon>Neisseriales</taxon>
        <taxon>Neisseriaceae</taxon>
        <taxon>Neisseria</taxon>
    </lineage>
</organism>
<reference key="1">
    <citation type="journal article" date="2000" name="Science">
        <title>Complete genome sequence of Neisseria meningitidis serogroup B strain MC58.</title>
        <authorList>
            <person name="Tettelin H."/>
            <person name="Saunders N.J."/>
            <person name="Heidelberg J.F."/>
            <person name="Jeffries A.C."/>
            <person name="Nelson K.E."/>
            <person name="Eisen J.A."/>
            <person name="Ketchum K.A."/>
            <person name="Hood D.W."/>
            <person name="Peden J.F."/>
            <person name="Dodson R.J."/>
            <person name="Nelson W.C."/>
            <person name="Gwinn M.L."/>
            <person name="DeBoy R.T."/>
            <person name="Peterson J.D."/>
            <person name="Hickey E.K."/>
            <person name="Haft D.H."/>
            <person name="Salzberg S.L."/>
            <person name="White O."/>
            <person name="Fleischmann R.D."/>
            <person name="Dougherty B.A."/>
            <person name="Mason T.M."/>
            <person name="Ciecko A."/>
            <person name="Parksey D.S."/>
            <person name="Blair E."/>
            <person name="Cittone H."/>
            <person name="Clark E.B."/>
            <person name="Cotton M.D."/>
            <person name="Utterback T.R."/>
            <person name="Khouri H.M."/>
            <person name="Qin H."/>
            <person name="Vamathevan J.J."/>
            <person name="Gill J."/>
            <person name="Scarlato V."/>
            <person name="Masignani V."/>
            <person name="Pizza M."/>
            <person name="Grandi G."/>
            <person name="Sun L."/>
            <person name="Smith H.O."/>
            <person name="Fraser C.M."/>
            <person name="Moxon E.R."/>
            <person name="Rappuoli R."/>
            <person name="Venter J.C."/>
        </authorList>
    </citation>
    <scope>NUCLEOTIDE SEQUENCE [LARGE SCALE GENOMIC DNA]</scope>
    <source>
        <strain>ATCC BAA-335 / MC58</strain>
    </source>
</reference>
<feature type="chain" id="PRO_0000131308" description="Large ribosomal subunit protein uL18">
    <location>
        <begin position="1"/>
        <end position="117"/>
    </location>
</feature>
<keyword id="KW-1185">Reference proteome</keyword>
<keyword id="KW-0687">Ribonucleoprotein</keyword>
<keyword id="KW-0689">Ribosomal protein</keyword>
<keyword id="KW-0694">RNA-binding</keyword>
<keyword id="KW-0699">rRNA-binding</keyword>